<dbReference type="EC" id="4.2.1.126" evidence="1"/>
<dbReference type="EMBL" id="CP001638">
    <property type="protein sequence ID" value="ACS24280.1"/>
    <property type="molecule type" value="Genomic_DNA"/>
</dbReference>
<dbReference type="SMR" id="C5DAG6"/>
<dbReference type="STRING" id="471223.GWCH70_1469"/>
<dbReference type="KEGG" id="gwc:GWCH70_1469"/>
<dbReference type="eggNOG" id="COG2103">
    <property type="taxonomic scope" value="Bacteria"/>
</dbReference>
<dbReference type="HOGENOM" id="CLU_049049_1_1_9"/>
<dbReference type="OrthoDB" id="9813395at2"/>
<dbReference type="UniPathway" id="UPA00342"/>
<dbReference type="GO" id="GO:0097367">
    <property type="term" value="F:carbohydrate derivative binding"/>
    <property type="evidence" value="ECO:0007669"/>
    <property type="project" value="InterPro"/>
</dbReference>
<dbReference type="GO" id="GO:0016835">
    <property type="term" value="F:carbon-oxygen lyase activity"/>
    <property type="evidence" value="ECO:0007669"/>
    <property type="project" value="UniProtKB-UniRule"/>
</dbReference>
<dbReference type="GO" id="GO:0016803">
    <property type="term" value="F:ether hydrolase activity"/>
    <property type="evidence" value="ECO:0007669"/>
    <property type="project" value="TreeGrafter"/>
</dbReference>
<dbReference type="GO" id="GO:0046348">
    <property type="term" value="P:amino sugar catabolic process"/>
    <property type="evidence" value="ECO:0007669"/>
    <property type="project" value="InterPro"/>
</dbReference>
<dbReference type="GO" id="GO:0097173">
    <property type="term" value="P:N-acetylmuramic acid catabolic process"/>
    <property type="evidence" value="ECO:0007669"/>
    <property type="project" value="UniProtKB-UniPathway"/>
</dbReference>
<dbReference type="GO" id="GO:0009254">
    <property type="term" value="P:peptidoglycan turnover"/>
    <property type="evidence" value="ECO:0007669"/>
    <property type="project" value="TreeGrafter"/>
</dbReference>
<dbReference type="CDD" id="cd05007">
    <property type="entry name" value="SIS_Etherase"/>
    <property type="match status" value="1"/>
</dbReference>
<dbReference type="FunFam" id="1.10.8.1080:FF:000001">
    <property type="entry name" value="N-acetylmuramic acid 6-phosphate etherase"/>
    <property type="match status" value="1"/>
</dbReference>
<dbReference type="FunFam" id="3.40.50.10490:FF:000014">
    <property type="entry name" value="N-acetylmuramic acid 6-phosphate etherase"/>
    <property type="match status" value="1"/>
</dbReference>
<dbReference type="Gene3D" id="1.10.8.1080">
    <property type="match status" value="1"/>
</dbReference>
<dbReference type="Gene3D" id="3.40.50.10490">
    <property type="entry name" value="Glucose-6-phosphate isomerase like protein, domain 1"/>
    <property type="match status" value="1"/>
</dbReference>
<dbReference type="HAMAP" id="MF_00068">
    <property type="entry name" value="MurQ"/>
    <property type="match status" value="1"/>
</dbReference>
<dbReference type="InterPro" id="IPR005488">
    <property type="entry name" value="Etherase_MurQ"/>
</dbReference>
<dbReference type="InterPro" id="IPR005486">
    <property type="entry name" value="Glucokinase_regulatory_CS"/>
</dbReference>
<dbReference type="InterPro" id="IPR040190">
    <property type="entry name" value="MURQ/GCKR"/>
</dbReference>
<dbReference type="InterPro" id="IPR001347">
    <property type="entry name" value="SIS_dom"/>
</dbReference>
<dbReference type="InterPro" id="IPR046348">
    <property type="entry name" value="SIS_dom_sf"/>
</dbReference>
<dbReference type="NCBIfam" id="TIGR00274">
    <property type="entry name" value="N-acetylmuramic acid 6-phosphate etherase"/>
    <property type="match status" value="1"/>
</dbReference>
<dbReference type="NCBIfam" id="NF003915">
    <property type="entry name" value="PRK05441.1"/>
    <property type="match status" value="1"/>
</dbReference>
<dbReference type="NCBIfam" id="NF009222">
    <property type="entry name" value="PRK12570.1"/>
    <property type="match status" value="1"/>
</dbReference>
<dbReference type="PANTHER" id="PTHR10088">
    <property type="entry name" value="GLUCOKINASE REGULATORY PROTEIN"/>
    <property type="match status" value="1"/>
</dbReference>
<dbReference type="PANTHER" id="PTHR10088:SF4">
    <property type="entry name" value="GLUCOKINASE REGULATORY PROTEIN"/>
    <property type="match status" value="1"/>
</dbReference>
<dbReference type="Pfam" id="PF22645">
    <property type="entry name" value="GKRP_SIS_N"/>
    <property type="match status" value="1"/>
</dbReference>
<dbReference type="SUPFAM" id="SSF53697">
    <property type="entry name" value="SIS domain"/>
    <property type="match status" value="1"/>
</dbReference>
<dbReference type="PROSITE" id="PS01272">
    <property type="entry name" value="GCKR"/>
    <property type="match status" value="1"/>
</dbReference>
<dbReference type="PROSITE" id="PS51464">
    <property type="entry name" value="SIS"/>
    <property type="match status" value="1"/>
</dbReference>
<organism>
    <name type="scientific">Geobacillus sp. (strain WCH70)</name>
    <dbReference type="NCBI Taxonomy" id="471223"/>
    <lineage>
        <taxon>Bacteria</taxon>
        <taxon>Bacillati</taxon>
        <taxon>Bacillota</taxon>
        <taxon>Bacilli</taxon>
        <taxon>Bacillales</taxon>
        <taxon>Anoxybacillaceae</taxon>
        <taxon>Geobacillus</taxon>
    </lineage>
</organism>
<sequence>MLERLTTEQRNNKTQNLDEMTTKEILQVMNEEDQTVAIAVSKELEHIERLVQKVIASFRQGGRLIYMGAGTSGRLGILDAVECPPTFGVEKEMVQGLIAGGLEAVTNAVEGAEDNEELAVKDLQSIGLTAKDTVIGIAASGRTPYVISGLRYAKQIGATTGSIACNKGAEISKYADVSVEVETGPEILTGSTRLKAGTAQKMVLNMISTASMIGIGKVYKNLMVDVQATNFKLKERAKRIIMEATDVDDKTAARYYEAARGHVKTAIVMILLQCSYEEATERLQKANGFVRKALQ</sequence>
<evidence type="ECO:0000255" key="1">
    <source>
        <dbReference type="HAMAP-Rule" id="MF_00068"/>
    </source>
</evidence>
<comment type="function">
    <text evidence="1">Specifically catalyzes the cleavage of the D-lactyl ether substituent of MurNAc 6-phosphate, producing GlcNAc 6-phosphate and D-lactate.</text>
</comment>
<comment type="catalytic activity">
    <reaction evidence="1">
        <text>N-acetyl-D-muramate 6-phosphate + H2O = N-acetyl-D-glucosamine 6-phosphate + (R)-lactate</text>
        <dbReference type="Rhea" id="RHEA:26410"/>
        <dbReference type="ChEBI" id="CHEBI:15377"/>
        <dbReference type="ChEBI" id="CHEBI:16004"/>
        <dbReference type="ChEBI" id="CHEBI:57513"/>
        <dbReference type="ChEBI" id="CHEBI:58722"/>
        <dbReference type="EC" id="4.2.1.126"/>
    </reaction>
</comment>
<comment type="pathway">
    <text evidence="1">Amino-sugar metabolism; N-acetylmuramate degradation.</text>
</comment>
<comment type="subunit">
    <text evidence="1">Homodimer.</text>
</comment>
<comment type="miscellaneous">
    <text evidence="1">A lyase-type mechanism (elimination/hydration) is suggested for the cleavage of the lactyl ether bond of MurNAc 6-phosphate, with the formation of an alpha,beta-unsaturated aldehyde intermediate with (E)-stereochemistry, followed by the syn addition of water to give product.</text>
</comment>
<comment type="similarity">
    <text evidence="1">Belongs to the GCKR-like family. MurNAc-6-P etherase subfamily.</text>
</comment>
<keyword id="KW-0119">Carbohydrate metabolism</keyword>
<keyword id="KW-0456">Lyase</keyword>
<gene>
    <name evidence="1" type="primary">murQ</name>
    <name type="ordered locus">GWCH70_1469</name>
</gene>
<feature type="chain" id="PRO_1000202430" description="N-acetylmuramic acid 6-phosphate etherase">
    <location>
        <begin position="1"/>
        <end position="295"/>
    </location>
</feature>
<feature type="domain" description="SIS" evidence="1">
    <location>
        <begin position="54"/>
        <end position="217"/>
    </location>
</feature>
<feature type="active site" description="Proton donor" evidence="1">
    <location>
        <position position="82"/>
    </location>
</feature>
<feature type="active site" evidence="1">
    <location>
        <position position="113"/>
    </location>
</feature>
<protein>
    <recommendedName>
        <fullName evidence="1">N-acetylmuramic acid 6-phosphate etherase</fullName>
        <shortName evidence="1">MurNAc-6-P etherase</shortName>
        <ecNumber evidence="1">4.2.1.126</ecNumber>
    </recommendedName>
    <alternativeName>
        <fullName evidence="1">N-acetylmuramic acid 6-phosphate hydrolase</fullName>
    </alternativeName>
    <alternativeName>
        <fullName evidence="1">N-acetylmuramic acid 6-phosphate lyase</fullName>
    </alternativeName>
</protein>
<proteinExistence type="inferred from homology"/>
<accession>C5DAG6</accession>
<reference key="1">
    <citation type="submission" date="2009-06" db="EMBL/GenBank/DDBJ databases">
        <title>Complete sequence of chromosome of Geopacillus sp. WCH70.</title>
        <authorList>
            <consortium name="US DOE Joint Genome Institute"/>
            <person name="Lucas S."/>
            <person name="Copeland A."/>
            <person name="Lapidus A."/>
            <person name="Glavina del Rio T."/>
            <person name="Dalin E."/>
            <person name="Tice H."/>
            <person name="Bruce D."/>
            <person name="Goodwin L."/>
            <person name="Pitluck S."/>
            <person name="Chertkov O."/>
            <person name="Brettin T."/>
            <person name="Detter J.C."/>
            <person name="Han C."/>
            <person name="Larimer F."/>
            <person name="Land M."/>
            <person name="Hauser L."/>
            <person name="Kyrpides N."/>
            <person name="Mikhailova N."/>
            <person name="Brumm P."/>
            <person name="Mead D.A."/>
            <person name="Richardson P."/>
        </authorList>
    </citation>
    <scope>NUCLEOTIDE SEQUENCE [LARGE SCALE GENOMIC DNA]</scope>
    <source>
        <strain>WCH70</strain>
    </source>
</reference>
<name>MURQ_GEOSW</name>